<gene>
    <name evidence="1" type="primary">dnaA</name>
    <name type="ordered locus">Atu0324</name>
    <name type="ORF">AGR_C_566</name>
</gene>
<accession>Q8UIH1</accession>
<organism>
    <name type="scientific">Agrobacterium fabrum (strain C58 / ATCC 33970)</name>
    <name type="common">Agrobacterium tumefaciens (strain C58)</name>
    <dbReference type="NCBI Taxonomy" id="176299"/>
    <lineage>
        <taxon>Bacteria</taxon>
        <taxon>Pseudomonadati</taxon>
        <taxon>Pseudomonadota</taxon>
        <taxon>Alphaproteobacteria</taxon>
        <taxon>Hyphomicrobiales</taxon>
        <taxon>Rhizobiaceae</taxon>
        <taxon>Rhizobium/Agrobacterium group</taxon>
        <taxon>Agrobacterium</taxon>
        <taxon>Agrobacterium tumefaciens complex</taxon>
    </lineage>
</organism>
<name>DNAA_AGRFC</name>
<proteinExistence type="inferred from homology"/>
<protein>
    <recommendedName>
        <fullName evidence="1">Chromosomal replication initiator protein DnaA</fullName>
    </recommendedName>
</protein>
<feature type="chain" id="PRO_0000114119" description="Chromosomal replication initiator protein DnaA">
    <location>
        <begin position="1"/>
        <end position="487"/>
    </location>
</feature>
<feature type="region of interest" description="Domain I, interacts with DnaA modulators" evidence="1">
    <location>
        <begin position="1"/>
        <end position="71"/>
    </location>
</feature>
<feature type="region of interest" description="Domain II" evidence="1">
    <location>
        <begin position="71"/>
        <end position="141"/>
    </location>
</feature>
<feature type="region of interest" description="Domain III, AAA+ region" evidence="1">
    <location>
        <begin position="142"/>
        <end position="364"/>
    </location>
</feature>
<feature type="region of interest" description="Domain IV, binds dsDNA" evidence="1">
    <location>
        <begin position="365"/>
        <end position="487"/>
    </location>
</feature>
<feature type="binding site" evidence="1">
    <location>
        <position position="188"/>
    </location>
    <ligand>
        <name>ATP</name>
        <dbReference type="ChEBI" id="CHEBI:30616"/>
    </ligand>
</feature>
<feature type="binding site" evidence="1">
    <location>
        <position position="190"/>
    </location>
    <ligand>
        <name>ATP</name>
        <dbReference type="ChEBI" id="CHEBI:30616"/>
    </ligand>
</feature>
<feature type="binding site" evidence="1">
    <location>
        <position position="191"/>
    </location>
    <ligand>
        <name>ATP</name>
        <dbReference type="ChEBI" id="CHEBI:30616"/>
    </ligand>
</feature>
<feature type="binding site" evidence="1">
    <location>
        <position position="192"/>
    </location>
    <ligand>
        <name>ATP</name>
        <dbReference type="ChEBI" id="CHEBI:30616"/>
    </ligand>
</feature>
<keyword id="KW-0067">ATP-binding</keyword>
<keyword id="KW-0963">Cytoplasm</keyword>
<keyword id="KW-0235">DNA replication</keyword>
<keyword id="KW-0238">DNA-binding</keyword>
<keyword id="KW-0446">Lipid-binding</keyword>
<keyword id="KW-0547">Nucleotide-binding</keyword>
<keyword id="KW-1185">Reference proteome</keyword>
<evidence type="ECO:0000255" key="1">
    <source>
        <dbReference type="HAMAP-Rule" id="MF_00377"/>
    </source>
</evidence>
<evidence type="ECO:0000305" key="2"/>
<sequence>MMHDALFERFSARLKAQVGPEVYASWFARLKLHTVSKSVVRFTVPTTFLKSWINNRYMDLITSLVQSEDPDVLKVEILVRSASRPVRPAQTEERAQPVQEVGAAPRNKSFIPSQSATAPAAQPMAAQATLRQGGSGPLFGSPLDTRFTFDTFVEGSSNRVALAAAKTIAEAGAGAVRFNPLFIHAGVGLGKTHLLQAIANAAIDSPRNPRVVYLTAEYFMWRFATAIRDNDALTLKDTLRNIDLLVIDDMQFLQGKMIQHEFCHLLNMLLDSAKQVVVAADRAPWELESLDPRVRSRLQGGMAIEIEGPDYDMRYEMLNRRMGSARQDDPSFEISDEILTHVAKSVTASGRELEGAFNQLMFRRSFEPNLSVDRVDELLSHLVGSGEAKRVRIEDIQRIVARHYNVSRQELVSNRRTRVIVKPRQIAMYLAKMLTPRSFPEIGRRFGGRDHTTVLHAVRKIEDLISGDTKLGHEVELLKRLINENNA</sequence>
<reference key="1">
    <citation type="journal article" date="2001" name="Science">
        <title>The genome of the natural genetic engineer Agrobacterium tumefaciens C58.</title>
        <authorList>
            <person name="Wood D.W."/>
            <person name="Setubal J.C."/>
            <person name="Kaul R."/>
            <person name="Monks D.E."/>
            <person name="Kitajima J.P."/>
            <person name="Okura V.K."/>
            <person name="Zhou Y."/>
            <person name="Chen L."/>
            <person name="Wood G.E."/>
            <person name="Almeida N.F. Jr."/>
            <person name="Woo L."/>
            <person name="Chen Y."/>
            <person name="Paulsen I.T."/>
            <person name="Eisen J.A."/>
            <person name="Karp P.D."/>
            <person name="Bovee D. Sr."/>
            <person name="Chapman P."/>
            <person name="Clendenning J."/>
            <person name="Deatherage G."/>
            <person name="Gillet W."/>
            <person name="Grant C."/>
            <person name="Kutyavin T."/>
            <person name="Levy R."/>
            <person name="Li M.-J."/>
            <person name="McClelland E."/>
            <person name="Palmieri A."/>
            <person name="Raymond C."/>
            <person name="Rouse G."/>
            <person name="Saenphimmachak C."/>
            <person name="Wu Z."/>
            <person name="Romero P."/>
            <person name="Gordon D."/>
            <person name="Zhang S."/>
            <person name="Yoo H."/>
            <person name="Tao Y."/>
            <person name="Biddle P."/>
            <person name="Jung M."/>
            <person name="Krespan W."/>
            <person name="Perry M."/>
            <person name="Gordon-Kamm B."/>
            <person name="Liao L."/>
            <person name="Kim S."/>
            <person name="Hendrick C."/>
            <person name="Zhao Z.-Y."/>
            <person name="Dolan M."/>
            <person name="Chumley F."/>
            <person name="Tingey S.V."/>
            <person name="Tomb J.-F."/>
            <person name="Gordon M.P."/>
            <person name="Olson M.V."/>
            <person name="Nester E.W."/>
        </authorList>
    </citation>
    <scope>NUCLEOTIDE SEQUENCE [LARGE SCALE GENOMIC DNA]</scope>
    <source>
        <strain>C58 / ATCC 33970</strain>
    </source>
</reference>
<reference key="2">
    <citation type="journal article" date="2001" name="Science">
        <title>Genome sequence of the plant pathogen and biotechnology agent Agrobacterium tumefaciens C58.</title>
        <authorList>
            <person name="Goodner B."/>
            <person name="Hinkle G."/>
            <person name="Gattung S."/>
            <person name="Miller N."/>
            <person name="Blanchard M."/>
            <person name="Qurollo B."/>
            <person name="Goldman B.S."/>
            <person name="Cao Y."/>
            <person name="Askenazi M."/>
            <person name="Halling C."/>
            <person name="Mullin L."/>
            <person name="Houmiel K."/>
            <person name="Gordon J."/>
            <person name="Vaudin M."/>
            <person name="Iartchouk O."/>
            <person name="Epp A."/>
            <person name="Liu F."/>
            <person name="Wollam C."/>
            <person name="Allinger M."/>
            <person name="Doughty D."/>
            <person name="Scott C."/>
            <person name="Lappas C."/>
            <person name="Markelz B."/>
            <person name="Flanagan C."/>
            <person name="Crowell C."/>
            <person name="Gurson J."/>
            <person name="Lomo C."/>
            <person name="Sear C."/>
            <person name="Strub G."/>
            <person name="Cielo C."/>
            <person name="Slater S."/>
        </authorList>
    </citation>
    <scope>NUCLEOTIDE SEQUENCE [LARGE SCALE GENOMIC DNA]</scope>
    <source>
        <strain>C58 / ATCC 33970</strain>
    </source>
</reference>
<dbReference type="EMBL" id="AE007869">
    <property type="protein sequence ID" value="AAK86141.2"/>
    <property type="status" value="ALT_INIT"/>
    <property type="molecule type" value="Genomic_DNA"/>
</dbReference>
<dbReference type="PIR" id="AD2616">
    <property type="entry name" value="AD2616"/>
</dbReference>
<dbReference type="PIR" id="D97398">
    <property type="entry name" value="D97398"/>
</dbReference>
<dbReference type="RefSeq" id="NP_353356.2">
    <property type="nucleotide sequence ID" value="NC_003062.2"/>
</dbReference>
<dbReference type="RefSeq" id="WP_006310171.1">
    <property type="nucleotide sequence ID" value="NC_003062.2"/>
</dbReference>
<dbReference type="SMR" id="Q8UIH1"/>
<dbReference type="STRING" id="176299.Atu0324"/>
<dbReference type="EnsemblBacteria" id="AAK86141">
    <property type="protein sequence ID" value="AAK86141"/>
    <property type="gene ID" value="Atu0324"/>
</dbReference>
<dbReference type="GeneID" id="1132362"/>
<dbReference type="KEGG" id="atu:Atu0324"/>
<dbReference type="PATRIC" id="fig|176299.10.peg.316"/>
<dbReference type="eggNOG" id="COG0593">
    <property type="taxonomic scope" value="Bacteria"/>
</dbReference>
<dbReference type="HOGENOM" id="CLU_026910_3_0_5"/>
<dbReference type="OrthoDB" id="9807019at2"/>
<dbReference type="Proteomes" id="UP000000813">
    <property type="component" value="Chromosome circular"/>
</dbReference>
<dbReference type="GO" id="GO:0005737">
    <property type="term" value="C:cytoplasm"/>
    <property type="evidence" value="ECO:0007669"/>
    <property type="project" value="UniProtKB-SubCell"/>
</dbReference>
<dbReference type="GO" id="GO:0005886">
    <property type="term" value="C:plasma membrane"/>
    <property type="evidence" value="ECO:0007669"/>
    <property type="project" value="TreeGrafter"/>
</dbReference>
<dbReference type="GO" id="GO:0005524">
    <property type="term" value="F:ATP binding"/>
    <property type="evidence" value="ECO:0007669"/>
    <property type="project" value="UniProtKB-UniRule"/>
</dbReference>
<dbReference type="GO" id="GO:0016887">
    <property type="term" value="F:ATP hydrolysis activity"/>
    <property type="evidence" value="ECO:0007669"/>
    <property type="project" value="InterPro"/>
</dbReference>
<dbReference type="GO" id="GO:0003688">
    <property type="term" value="F:DNA replication origin binding"/>
    <property type="evidence" value="ECO:0007669"/>
    <property type="project" value="UniProtKB-UniRule"/>
</dbReference>
<dbReference type="GO" id="GO:0008289">
    <property type="term" value="F:lipid binding"/>
    <property type="evidence" value="ECO:0007669"/>
    <property type="project" value="UniProtKB-KW"/>
</dbReference>
<dbReference type="GO" id="GO:0006270">
    <property type="term" value="P:DNA replication initiation"/>
    <property type="evidence" value="ECO:0007669"/>
    <property type="project" value="UniProtKB-UniRule"/>
</dbReference>
<dbReference type="GO" id="GO:0006275">
    <property type="term" value="P:regulation of DNA replication"/>
    <property type="evidence" value="ECO:0007669"/>
    <property type="project" value="UniProtKB-UniRule"/>
</dbReference>
<dbReference type="CDD" id="cd00009">
    <property type="entry name" value="AAA"/>
    <property type="match status" value="1"/>
</dbReference>
<dbReference type="CDD" id="cd06571">
    <property type="entry name" value="Bac_DnaA_C"/>
    <property type="match status" value="1"/>
</dbReference>
<dbReference type="FunFam" id="1.10.1750.10:FF:000002">
    <property type="entry name" value="Chromosomal replication initiator protein DnaA"/>
    <property type="match status" value="1"/>
</dbReference>
<dbReference type="Gene3D" id="1.10.1750.10">
    <property type="match status" value="1"/>
</dbReference>
<dbReference type="Gene3D" id="1.10.8.60">
    <property type="match status" value="1"/>
</dbReference>
<dbReference type="Gene3D" id="3.30.300.180">
    <property type="match status" value="1"/>
</dbReference>
<dbReference type="Gene3D" id="3.40.50.300">
    <property type="entry name" value="P-loop containing nucleotide triphosphate hydrolases"/>
    <property type="match status" value="1"/>
</dbReference>
<dbReference type="HAMAP" id="MF_00377">
    <property type="entry name" value="DnaA_bact"/>
    <property type="match status" value="1"/>
</dbReference>
<dbReference type="InterPro" id="IPR003593">
    <property type="entry name" value="AAA+_ATPase"/>
</dbReference>
<dbReference type="InterPro" id="IPR001957">
    <property type="entry name" value="Chromosome_initiator_DnaA"/>
</dbReference>
<dbReference type="InterPro" id="IPR020591">
    <property type="entry name" value="Chromosome_initiator_DnaA-like"/>
</dbReference>
<dbReference type="InterPro" id="IPR018312">
    <property type="entry name" value="Chromosome_initiator_DnaA_CS"/>
</dbReference>
<dbReference type="InterPro" id="IPR013159">
    <property type="entry name" value="DnaA_C"/>
</dbReference>
<dbReference type="InterPro" id="IPR013317">
    <property type="entry name" value="DnaA_dom"/>
</dbReference>
<dbReference type="InterPro" id="IPR024633">
    <property type="entry name" value="DnaA_N_dom"/>
</dbReference>
<dbReference type="InterPro" id="IPR038454">
    <property type="entry name" value="DnaA_N_sf"/>
</dbReference>
<dbReference type="InterPro" id="IPR027417">
    <property type="entry name" value="P-loop_NTPase"/>
</dbReference>
<dbReference type="InterPro" id="IPR010921">
    <property type="entry name" value="Trp_repressor/repl_initiator"/>
</dbReference>
<dbReference type="NCBIfam" id="TIGR00362">
    <property type="entry name" value="DnaA"/>
    <property type="match status" value="1"/>
</dbReference>
<dbReference type="PANTHER" id="PTHR30050">
    <property type="entry name" value="CHROMOSOMAL REPLICATION INITIATOR PROTEIN DNAA"/>
    <property type="match status" value="1"/>
</dbReference>
<dbReference type="PANTHER" id="PTHR30050:SF2">
    <property type="entry name" value="CHROMOSOMAL REPLICATION INITIATOR PROTEIN DNAA"/>
    <property type="match status" value="1"/>
</dbReference>
<dbReference type="Pfam" id="PF00308">
    <property type="entry name" value="Bac_DnaA"/>
    <property type="match status" value="1"/>
</dbReference>
<dbReference type="Pfam" id="PF08299">
    <property type="entry name" value="Bac_DnaA_C"/>
    <property type="match status" value="1"/>
</dbReference>
<dbReference type="Pfam" id="PF11638">
    <property type="entry name" value="DnaA_N"/>
    <property type="match status" value="1"/>
</dbReference>
<dbReference type="PRINTS" id="PR00051">
    <property type="entry name" value="DNAA"/>
</dbReference>
<dbReference type="SMART" id="SM00382">
    <property type="entry name" value="AAA"/>
    <property type="match status" value="1"/>
</dbReference>
<dbReference type="SMART" id="SM00760">
    <property type="entry name" value="Bac_DnaA_C"/>
    <property type="match status" value="1"/>
</dbReference>
<dbReference type="SUPFAM" id="SSF52540">
    <property type="entry name" value="P-loop containing nucleoside triphosphate hydrolases"/>
    <property type="match status" value="1"/>
</dbReference>
<dbReference type="SUPFAM" id="SSF48295">
    <property type="entry name" value="TrpR-like"/>
    <property type="match status" value="1"/>
</dbReference>
<dbReference type="PROSITE" id="PS01008">
    <property type="entry name" value="DNAA"/>
    <property type="match status" value="1"/>
</dbReference>
<comment type="function">
    <text evidence="1">Plays an essential role in the initiation and regulation of chromosomal replication. ATP-DnaA binds to the origin of replication (oriC) to initiate formation of the DNA replication initiation complex once per cell cycle. Binds the DnaA box (a 9 base pair repeat at the origin) and separates the double-stranded (ds)DNA. Forms a right-handed helical filament on oriC DNA; dsDNA binds to the exterior of the filament while single-stranded (ss)DNA is stabiized in the filament's interior. The ATP-DnaA-oriC complex binds and stabilizes one strand of the AT-rich DNA unwinding element (DUE), permitting loading of DNA polymerase. After initiation quickly degrades to an ADP-DnaA complex that is not apt for DNA replication. Binds acidic phospholipids.</text>
</comment>
<comment type="subunit">
    <text evidence="1">Oligomerizes as a right-handed, spiral filament on DNA at oriC.</text>
</comment>
<comment type="subcellular location">
    <subcellularLocation>
        <location evidence="1">Cytoplasm</location>
    </subcellularLocation>
</comment>
<comment type="domain">
    <text evidence="1">Domain I is involved in oligomerization and binding regulators, domain II is flexibile and of varying length in different bacteria, domain III forms the AAA+ region, while domain IV binds dsDNA.</text>
</comment>
<comment type="similarity">
    <text evidence="1">Belongs to the DnaA family.</text>
</comment>
<comment type="sequence caution" evidence="2">
    <conflict type="erroneous initiation">
        <sequence resource="EMBL-CDS" id="AAK86141"/>
    </conflict>
</comment>